<keyword id="KW-0963">Cytoplasm</keyword>
<keyword id="KW-0378">Hydrolase</keyword>
<keyword id="KW-0443">Lipid metabolism</keyword>
<keyword id="KW-1185">Reference proteome</keyword>
<accession>P0ADP3</accession>
<accession>P27845</accession>
<accession>P76761</accession>
<feature type="chain" id="PRO_0000169659" description="Medium/long-chain acyl-CoA thioesterase YigI">
    <location>
        <begin position="1"/>
        <end position="155"/>
    </location>
</feature>
<dbReference type="EC" id="3.1.2.20" evidence="1"/>
<dbReference type="EMBL" id="AE014075">
    <property type="protein sequence ID" value="AAN83174.1"/>
    <property type="status" value="ALT_INIT"/>
    <property type="molecule type" value="Genomic_DNA"/>
</dbReference>
<dbReference type="RefSeq" id="WP_001277142.1">
    <property type="nucleotide sequence ID" value="NZ_CP051263.1"/>
</dbReference>
<dbReference type="SMR" id="P0ADP3"/>
<dbReference type="STRING" id="199310.c4741"/>
<dbReference type="GeneID" id="93778117"/>
<dbReference type="KEGG" id="ecc:c4741"/>
<dbReference type="eggNOG" id="COG2050">
    <property type="taxonomic scope" value="Bacteria"/>
</dbReference>
<dbReference type="HOGENOM" id="CLU_089876_7_2_6"/>
<dbReference type="Proteomes" id="UP000001410">
    <property type="component" value="Chromosome"/>
</dbReference>
<dbReference type="GO" id="GO:0005737">
    <property type="term" value="C:cytoplasm"/>
    <property type="evidence" value="ECO:0007669"/>
    <property type="project" value="UniProtKB-SubCell"/>
</dbReference>
<dbReference type="GO" id="GO:0016289">
    <property type="term" value="F:acyl-CoA hydrolase activity"/>
    <property type="evidence" value="ECO:0007669"/>
    <property type="project" value="UniProtKB-ARBA"/>
</dbReference>
<dbReference type="GO" id="GO:0006629">
    <property type="term" value="P:lipid metabolic process"/>
    <property type="evidence" value="ECO:0007669"/>
    <property type="project" value="UniProtKB-KW"/>
</dbReference>
<dbReference type="CDD" id="cd03443">
    <property type="entry name" value="PaaI_thioesterase"/>
    <property type="match status" value="1"/>
</dbReference>
<dbReference type="FunFam" id="3.10.129.10:FF:000007">
    <property type="entry name" value="Thioesterase family protein"/>
    <property type="match status" value="1"/>
</dbReference>
<dbReference type="Gene3D" id="3.10.129.10">
    <property type="entry name" value="Hotdog Thioesterase"/>
    <property type="match status" value="1"/>
</dbReference>
<dbReference type="InterPro" id="IPR029069">
    <property type="entry name" value="HotDog_dom_sf"/>
</dbReference>
<dbReference type="InterPro" id="IPR003736">
    <property type="entry name" value="PAAI_dom"/>
</dbReference>
<dbReference type="InterPro" id="IPR006683">
    <property type="entry name" value="Thioestr_dom"/>
</dbReference>
<dbReference type="NCBIfam" id="NF008675">
    <property type="entry name" value="PRK11688.1"/>
    <property type="match status" value="1"/>
</dbReference>
<dbReference type="NCBIfam" id="TIGR00369">
    <property type="entry name" value="unchar_dom_1"/>
    <property type="match status" value="1"/>
</dbReference>
<dbReference type="PANTHER" id="PTHR43240">
    <property type="entry name" value="1,4-DIHYDROXY-2-NAPHTHOYL-COA THIOESTERASE 1"/>
    <property type="match status" value="1"/>
</dbReference>
<dbReference type="PANTHER" id="PTHR43240:SF20">
    <property type="entry name" value="MEDIUM_LONG-CHAIN ACYL-COA THIOESTERASE YIGI"/>
    <property type="match status" value="1"/>
</dbReference>
<dbReference type="Pfam" id="PF03061">
    <property type="entry name" value="4HBT"/>
    <property type="match status" value="1"/>
</dbReference>
<dbReference type="SUPFAM" id="SSF54637">
    <property type="entry name" value="Thioesterase/thiol ester dehydrase-isomerase"/>
    <property type="match status" value="1"/>
</dbReference>
<organism>
    <name type="scientific">Escherichia coli O6:H1 (strain CFT073 / ATCC 700928 / UPEC)</name>
    <dbReference type="NCBI Taxonomy" id="199310"/>
    <lineage>
        <taxon>Bacteria</taxon>
        <taxon>Pseudomonadati</taxon>
        <taxon>Pseudomonadota</taxon>
        <taxon>Gammaproteobacteria</taxon>
        <taxon>Enterobacterales</taxon>
        <taxon>Enterobacteriaceae</taxon>
        <taxon>Escherichia</taxon>
    </lineage>
</organism>
<name>YIGI_ECOL6</name>
<comment type="function">
    <text evidence="1">Displays thioesterase activity against medium- to long-chain acyl-CoA substrates (By similarity). Is involved in the thioesterase-dependent beta-oxidation pathway of (9Z,11E)-octadecadienoate (conjugated linoleic acid or CLA), along with TesB and FadM (By similarity).</text>
</comment>
<comment type="catalytic activity">
    <reaction evidence="1">
        <text>a fatty acyl-CoA + H2O = a fatty acid + CoA + H(+)</text>
        <dbReference type="Rhea" id="RHEA:16781"/>
        <dbReference type="ChEBI" id="CHEBI:15377"/>
        <dbReference type="ChEBI" id="CHEBI:15378"/>
        <dbReference type="ChEBI" id="CHEBI:28868"/>
        <dbReference type="ChEBI" id="CHEBI:57287"/>
        <dbReference type="ChEBI" id="CHEBI:77636"/>
        <dbReference type="EC" id="3.1.2.20"/>
    </reaction>
</comment>
<comment type="catalytic activity">
    <reaction evidence="1">
        <text>a medium-chain fatty acyl-CoA + H2O = a medium-chain fatty acid + CoA + H(+)</text>
        <dbReference type="Rhea" id="RHEA:68184"/>
        <dbReference type="ChEBI" id="CHEBI:15377"/>
        <dbReference type="ChEBI" id="CHEBI:15378"/>
        <dbReference type="ChEBI" id="CHEBI:57287"/>
        <dbReference type="ChEBI" id="CHEBI:59558"/>
        <dbReference type="ChEBI" id="CHEBI:90546"/>
    </reaction>
</comment>
<comment type="catalytic activity">
    <reaction evidence="1">
        <text>a long-chain fatty acyl-CoA + H2O = a long-chain fatty acid + CoA + H(+)</text>
        <dbReference type="Rhea" id="RHEA:67680"/>
        <dbReference type="ChEBI" id="CHEBI:15377"/>
        <dbReference type="ChEBI" id="CHEBI:15378"/>
        <dbReference type="ChEBI" id="CHEBI:57287"/>
        <dbReference type="ChEBI" id="CHEBI:57560"/>
        <dbReference type="ChEBI" id="CHEBI:83139"/>
    </reaction>
</comment>
<comment type="subcellular location">
    <subcellularLocation>
        <location evidence="1">Cytoplasm</location>
    </subcellularLocation>
</comment>
<comment type="similarity">
    <text evidence="2">Belongs to the YigI thioesterase family.</text>
</comment>
<comment type="sequence caution" evidence="2">
    <conflict type="erroneous initiation">
        <sequence resource="EMBL-CDS" id="AAN83174"/>
    </conflict>
</comment>
<protein>
    <recommendedName>
        <fullName evidence="1">Medium/long-chain acyl-CoA thioesterase YigI</fullName>
        <ecNumber evidence="1">3.1.2.20</ecNumber>
    </recommendedName>
</protein>
<evidence type="ECO:0000250" key="1">
    <source>
        <dbReference type="UniProtKB" id="P0ADP2"/>
    </source>
</evidence>
<evidence type="ECO:0000305" key="2"/>
<gene>
    <name type="primary">yigI</name>
    <name type="ordered locus">c4741</name>
</gene>
<proteinExistence type="inferred from homology"/>
<sequence length="155" mass="17163">MSAVLTAEQALKLVGEMFVYHMPFNRALGMELERYEKEFAQLAFKNQPMMVGNWAQSILHGGVIASALDVAAGLVCVGSTLTRHETISEDELRQRLSRMGTIDLRVDYLRPGRGERFTATSSLLRAGNKVAVARVELHNEEQLYIASATATYMVG</sequence>
<reference key="1">
    <citation type="journal article" date="2002" name="Proc. Natl. Acad. Sci. U.S.A.">
        <title>Extensive mosaic structure revealed by the complete genome sequence of uropathogenic Escherichia coli.</title>
        <authorList>
            <person name="Welch R.A."/>
            <person name="Burland V."/>
            <person name="Plunkett G. III"/>
            <person name="Redford P."/>
            <person name="Roesch P."/>
            <person name="Rasko D."/>
            <person name="Buckles E.L."/>
            <person name="Liou S.-R."/>
            <person name="Boutin A."/>
            <person name="Hackett J."/>
            <person name="Stroud D."/>
            <person name="Mayhew G.F."/>
            <person name="Rose D.J."/>
            <person name="Zhou S."/>
            <person name="Schwartz D.C."/>
            <person name="Perna N.T."/>
            <person name="Mobley H.L.T."/>
            <person name="Donnenberg M.S."/>
            <person name="Blattner F.R."/>
        </authorList>
    </citation>
    <scope>NUCLEOTIDE SEQUENCE [LARGE SCALE GENOMIC DNA]</scope>
    <source>
        <strain>CFT073 / ATCC 700928 / UPEC</strain>
    </source>
</reference>